<reference key="1">
    <citation type="journal article" date="1992" name="J. Virol.">
        <title>Primary structure of the herpesvirus saimiri genome.</title>
        <authorList>
            <person name="Albrecht J.-C."/>
            <person name="Nicholas J."/>
            <person name="Biller D."/>
            <person name="Cameron K.R."/>
            <person name="Biesinger B."/>
            <person name="Newman C."/>
            <person name="Wittmann S."/>
            <person name="Craxton M.A."/>
            <person name="Coleman H."/>
            <person name="Fleckenstein B."/>
            <person name="Honess R.W."/>
        </authorList>
    </citation>
    <scope>NUCLEOTIDE SEQUENCE [LARGE SCALE GENOMIC DNA]</scope>
</reference>
<reference key="2">
    <citation type="journal article" date="1992" name="Virology">
        <title>Analysis of nucleotide sequence of the rightmost 43 kbp of herpesvirus saimiri (HVS) L-DNA: general conservation of genetic organization between HVS and Epstein-Barr virus.</title>
        <authorList>
            <person name="Nicholas J."/>
            <person name="Cameron K.R."/>
            <person name="Coleman H."/>
            <person name="Newman C."/>
            <person name="Honess R.W."/>
        </authorList>
    </citation>
    <scope>NUCLEOTIDE SEQUENCE [GENOMIC DNA]</scope>
</reference>
<feature type="chain" id="PRO_0000116212" description="Gene 55 protein">
    <location>
        <begin position="1"/>
        <end position="200"/>
    </location>
</feature>
<feature type="lipid moiety-binding region" description="S-palmitoyl cysteine; by host" evidence="1">
    <location>
        <position position="8"/>
    </location>
</feature>
<name>TEG7_SHV21</name>
<protein>
    <recommendedName>
        <fullName>Gene 55 protein</fullName>
    </recommendedName>
</protein>
<proteinExistence type="inferred from homology"/>
<organism>
    <name type="scientific">Saimiriine herpesvirus 2 (strain 11)</name>
    <name type="common">SaHV-2</name>
    <name type="synonym">Herpesvirus saimiri</name>
    <dbReference type="NCBI Taxonomy" id="10383"/>
    <lineage>
        <taxon>Viruses</taxon>
        <taxon>Duplodnaviria</taxon>
        <taxon>Heunggongvirae</taxon>
        <taxon>Peploviricota</taxon>
        <taxon>Herviviricetes</taxon>
        <taxon>Herpesvirales</taxon>
        <taxon>Orthoherpesviridae</taxon>
        <taxon>Gammaherpesvirinae</taxon>
        <taxon>Rhadinovirus</taxon>
        <taxon>Rhadinovirus saimiriinegamma2</taxon>
        <taxon>Saimiriine herpesvirus 2</taxon>
    </lineage>
</organism>
<dbReference type="EMBL" id="X64346">
    <property type="protein sequence ID" value="CAA45679.1"/>
    <property type="molecule type" value="Genomic_DNA"/>
</dbReference>
<dbReference type="EMBL" id="M86409">
    <property type="protein sequence ID" value="AAA46132.1"/>
    <property type="molecule type" value="Genomic_DNA"/>
</dbReference>
<dbReference type="RefSeq" id="NP_040257.1">
    <property type="nucleotide sequence ID" value="NC_001350.1"/>
</dbReference>
<dbReference type="SMR" id="Q01048"/>
<dbReference type="KEGG" id="vg:1682477"/>
<dbReference type="Proteomes" id="UP000000587">
    <property type="component" value="Segment"/>
</dbReference>
<dbReference type="GO" id="GO:0044177">
    <property type="term" value="C:host cell Golgi apparatus"/>
    <property type="evidence" value="ECO:0007669"/>
    <property type="project" value="UniProtKB-SubCell"/>
</dbReference>
<dbReference type="GO" id="GO:0019033">
    <property type="term" value="C:viral tegument"/>
    <property type="evidence" value="ECO:0007669"/>
    <property type="project" value="UniProtKB-SubCell"/>
</dbReference>
<dbReference type="InterPro" id="IPR007619">
    <property type="entry name" value="Herpes_U44"/>
</dbReference>
<dbReference type="Pfam" id="PF04533">
    <property type="entry name" value="Herpes_U44"/>
    <property type="match status" value="1"/>
</dbReference>
<accession>Q01048</accession>
<organismHost>
    <name type="scientific">Saimiri sciureus</name>
    <name type="common">Common squirrel monkey</name>
    <dbReference type="NCBI Taxonomy" id="9521"/>
</organismHost>
<sequence>MLQWLHSCWPFGKYRRQKYVPLDTSSSCPDRWKIEIEIAQPPGVFVGDILQNSDSDASLRQAYLLAVQLNNITDYLKRFDEASVPESCKSVVQTQITKLKSVRNIIWNTMLSMAVGGVTIDDAALKTLLDKRAGESIALIEMEKLATAIVMDDSKAWAKEINNIILSAEHEKQILVNSEVPLIECETLAAEKTTTPAVSI</sequence>
<keyword id="KW-1035">Host cytoplasm</keyword>
<keyword id="KW-1040">Host Golgi apparatus</keyword>
<keyword id="KW-0449">Lipoprotein</keyword>
<keyword id="KW-0564">Palmitate</keyword>
<keyword id="KW-0597">Phosphoprotein</keyword>
<keyword id="KW-1185">Reference proteome</keyword>
<keyword id="KW-0946">Virion</keyword>
<keyword id="KW-0920">Virion tegument</keyword>
<evidence type="ECO:0000250" key="1">
    <source>
        <dbReference type="UniProtKB" id="P10235"/>
    </source>
</evidence>
<evidence type="ECO:0000250" key="2">
    <source>
        <dbReference type="UniProtKB" id="P16823"/>
    </source>
</evidence>
<evidence type="ECO:0000305" key="3"/>
<comment type="function">
    <text evidence="1">Plays several roles during the time course of infection, including egress of virus particles from the perinuclear space and secondary envelopment of cytoplasmic capsids that bud into specific trans-Golgi network (TGN)-derived membranes.</text>
</comment>
<comment type="subunit">
    <text evidence="1 2">Oligomerizes. Interacts with ORF42; this interaction mediates ORF42 incorporation to virions.</text>
</comment>
<comment type="subcellular location">
    <subcellularLocation>
        <location evidence="1">Virion tegument</location>
    </subcellularLocation>
    <subcellularLocation>
        <location evidence="1">Host cytoplasm</location>
    </subcellularLocation>
    <subcellularLocation>
        <location evidence="1">Host Golgi apparatus</location>
    </subcellularLocation>
</comment>
<comment type="PTM">
    <text evidence="1">Phosphorylated.</text>
</comment>
<comment type="PTM">
    <text evidence="1">Palmitoylation is necessary for Golgi localization.</text>
</comment>
<comment type="similarity">
    <text evidence="3">Belongs to the herpesviridae UL51 family.</text>
</comment>
<gene>
    <name type="primary">55</name>
    <name type="synonym">EDLF1</name>
</gene>